<keyword id="KW-0007">Acetylation</keyword>
<keyword id="KW-0175">Coiled coil</keyword>
<keyword id="KW-0963">Cytoplasm</keyword>
<keyword id="KW-0333">Golgi apparatus</keyword>
<keyword id="KW-0472">Membrane</keyword>
<keyword id="KW-0597">Phosphoprotein</keyword>
<keyword id="KW-0653">Protein transport</keyword>
<keyword id="KW-1185">Reference proteome</keyword>
<keyword id="KW-0677">Repeat</keyword>
<keyword id="KW-0813">Transport</keyword>
<organism>
    <name type="scientific">Bos taurus</name>
    <name type="common">Bovine</name>
    <dbReference type="NCBI Taxonomy" id="9913"/>
    <lineage>
        <taxon>Eukaryota</taxon>
        <taxon>Metazoa</taxon>
        <taxon>Chordata</taxon>
        <taxon>Craniata</taxon>
        <taxon>Vertebrata</taxon>
        <taxon>Euteleostomi</taxon>
        <taxon>Mammalia</taxon>
        <taxon>Eutheria</taxon>
        <taxon>Laurasiatheria</taxon>
        <taxon>Artiodactyla</taxon>
        <taxon>Ruminantia</taxon>
        <taxon>Pecora</taxon>
        <taxon>Bovidae</taxon>
        <taxon>Bovinae</taxon>
        <taxon>Bos</taxon>
    </lineage>
</organism>
<protein>
    <recommendedName>
        <fullName>AP-3 complex subunit delta-1</fullName>
    </recommendedName>
    <alternativeName>
        <fullName>AP-3 complex subunit delta</fullName>
    </alternativeName>
    <alternativeName>
        <fullName>Adaptor-related protein complex 3 subunit delta-1</fullName>
    </alternativeName>
    <alternativeName>
        <fullName>BLVPCP1</fullName>
    </alternativeName>
    <alternativeName>
        <fullName>Bovine leukemia virus cell receptor</fullName>
        <shortName>BLV-R</shortName>
    </alternativeName>
    <alternativeName>
        <fullName>Delta-adaptin</fullName>
    </alternativeName>
</protein>
<evidence type="ECO:0000250" key="1"/>
<evidence type="ECO:0000250" key="2">
    <source>
        <dbReference type="UniProtKB" id="O14617"/>
    </source>
</evidence>
<evidence type="ECO:0000250" key="3">
    <source>
        <dbReference type="UniProtKB" id="O54774"/>
    </source>
</evidence>
<evidence type="ECO:0000255" key="4"/>
<evidence type="ECO:0000256" key="5">
    <source>
        <dbReference type="SAM" id="MobiDB-lite"/>
    </source>
</evidence>
<evidence type="ECO:0000269" key="6">
    <source>
    </source>
</evidence>
<evidence type="ECO:0000305" key="7"/>
<evidence type="ECO:0000305" key="8">
    <source>
    </source>
</evidence>
<accession>Q865S1</accession>
<accession>Q03368</accession>
<accession>Q28876</accession>
<dbReference type="EMBL" id="AB015979">
    <property type="protein sequence ID" value="BAA36591.1"/>
    <property type="status" value="ALT_INIT"/>
    <property type="molecule type" value="mRNA"/>
</dbReference>
<dbReference type="EMBL" id="S75828">
    <property type="protein sequence ID" value="AAB32770.2"/>
    <property type="status" value="ALT_SEQ"/>
    <property type="molecule type" value="Genomic_DNA"/>
</dbReference>
<dbReference type="EMBL" id="M98430">
    <property type="protein sequence ID" value="AAA30633.1"/>
    <property type="status" value="ALT_SEQ"/>
    <property type="molecule type" value="mRNA"/>
</dbReference>
<dbReference type="RefSeq" id="NP_776423.3">
    <property type="nucleotide sequence ID" value="NM_173998.4"/>
</dbReference>
<dbReference type="SMR" id="Q865S1"/>
<dbReference type="FunCoup" id="Q865S1">
    <property type="interactions" value="4781"/>
</dbReference>
<dbReference type="STRING" id="9913.ENSBTAP00000071754"/>
<dbReference type="GlyGen" id="Q865S1">
    <property type="glycosylation" value="1 site, 1 O-linked glycan (1 site)"/>
</dbReference>
<dbReference type="PaxDb" id="9913-ENSBTAP00000011906"/>
<dbReference type="PeptideAtlas" id="Q865S1"/>
<dbReference type="GeneID" id="281023"/>
<dbReference type="KEGG" id="bta:281023"/>
<dbReference type="CTD" id="8943"/>
<dbReference type="VEuPathDB" id="HostDB:ENSBTAG00000009034"/>
<dbReference type="eggNOG" id="KOG1059">
    <property type="taxonomic scope" value="Eukaryota"/>
</dbReference>
<dbReference type="HOGENOM" id="CLU_001908_0_0_1"/>
<dbReference type="InParanoid" id="Q865S1"/>
<dbReference type="OrthoDB" id="10264595at2759"/>
<dbReference type="TreeFam" id="TF105666"/>
<dbReference type="Proteomes" id="UP000009136">
    <property type="component" value="Chromosome 7"/>
</dbReference>
<dbReference type="Bgee" id="ENSBTAG00000009034">
    <property type="expression patterns" value="Expressed in pigment epithelium of eye and 106 other cell types or tissues"/>
</dbReference>
<dbReference type="GO" id="GO:0030123">
    <property type="term" value="C:AP-3 adaptor complex"/>
    <property type="evidence" value="ECO:0000318"/>
    <property type="project" value="GO_Central"/>
</dbReference>
<dbReference type="GO" id="GO:1904115">
    <property type="term" value="C:axon cytoplasm"/>
    <property type="evidence" value="ECO:0007669"/>
    <property type="project" value="GOC"/>
</dbReference>
<dbReference type="GO" id="GO:0010008">
    <property type="term" value="C:endosome membrane"/>
    <property type="evidence" value="ECO:0000318"/>
    <property type="project" value="GO_Central"/>
</dbReference>
<dbReference type="GO" id="GO:0000139">
    <property type="term" value="C:Golgi membrane"/>
    <property type="evidence" value="ECO:0007669"/>
    <property type="project" value="UniProtKB-SubCell"/>
</dbReference>
<dbReference type="GO" id="GO:0098830">
    <property type="term" value="C:presynaptic endosome"/>
    <property type="evidence" value="ECO:0000318"/>
    <property type="project" value="GO_Central"/>
</dbReference>
<dbReference type="GO" id="GO:0043195">
    <property type="term" value="C:terminal bouton"/>
    <property type="evidence" value="ECO:0000318"/>
    <property type="project" value="GO_Central"/>
</dbReference>
<dbReference type="GO" id="GO:0008089">
    <property type="term" value="P:anterograde axonal transport"/>
    <property type="evidence" value="ECO:0000250"/>
    <property type="project" value="UniProtKB"/>
</dbReference>
<dbReference type="GO" id="GO:0048490">
    <property type="term" value="P:anterograde synaptic vesicle transport"/>
    <property type="evidence" value="ECO:0000250"/>
    <property type="project" value="UniProtKB"/>
</dbReference>
<dbReference type="GO" id="GO:0006896">
    <property type="term" value="P:Golgi to vacuole transport"/>
    <property type="evidence" value="ECO:0000318"/>
    <property type="project" value="GO_Central"/>
</dbReference>
<dbReference type="GO" id="GO:0098943">
    <property type="term" value="P:neurotransmitter receptor transport, postsynaptic endosome to lysosome"/>
    <property type="evidence" value="ECO:0000318"/>
    <property type="project" value="GO_Central"/>
</dbReference>
<dbReference type="GO" id="GO:0006623">
    <property type="term" value="P:protein targeting to vacuole"/>
    <property type="evidence" value="ECO:0000318"/>
    <property type="project" value="GO_Central"/>
</dbReference>
<dbReference type="GO" id="GO:0016182">
    <property type="term" value="P:synaptic vesicle budding from endosome"/>
    <property type="evidence" value="ECO:0000318"/>
    <property type="project" value="GO_Central"/>
</dbReference>
<dbReference type="GO" id="GO:0048499">
    <property type="term" value="P:synaptic vesicle membrane organization"/>
    <property type="evidence" value="ECO:0000318"/>
    <property type="project" value="GO_Central"/>
</dbReference>
<dbReference type="FunFam" id="1.25.10.10:FF:000055">
    <property type="entry name" value="AP-3 complex subunit delta"/>
    <property type="match status" value="1"/>
</dbReference>
<dbReference type="FunFam" id="3.30.450.50:FF:000001">
    <property type="entry name" value="AP-3 complex subunit delta-1, putative"/>
    <property type="match status" value="1"/>
</dbReference>
<dbReference type="Gene3D" id="1.25.10.10">
    <property type="entry name" value="Leucine-rich Repeat Variant"/>
    <property type="match status" value="1"/>
</dbReference>
<dbReference type="Gene3D" id="3.30.450.50">
    <property type="entry name" value="Longin domain"/>
    <property type="match status" value="1"/>
</dbReference>
<dbReference type="InterPro" id="IPR017105">
    <property type="entry name" value="AP3_complex_dsu"/>
</dbReference>
<dbReference type="InterPro" id="IPR010474">
    <property type="entry name" value="AP3D_dom_metazoa"/>
</dbReference>
<dbReference type="InterPro" id="IPR011989">
    <property type="entry name" value="ARM-like"/>
</dbReference>
<dbReference type="InterPro" id="IPR016024">
    <property type="entry name" value="ARM-type_fold"/>
</dbReference>
<dbReference type="InterPro" id="IPR002553">
    <property type="entry name" value="Clathrin/coatomer_adapt-like_N"/>
</dbReference>
<dbReference type="PANTHER" id="PTHR22781:SF12">
    <property type="entry name" value="AP-3 COMPLEX SUBUNIT DELTA-1"/>
    <property type="match status" value="1"/>
</dbReference>
<dbReference type="PANTHER" id="PTHR22781">
    <property type="entry name" value="DELTA ADAPTIN-RELATED"/>
    <property type="match status" value="1"/>
</dbReference>
<dbReference type="Pfam" id="PF01602">
    <property type="entry name" value="Adaptin_N"/>
    <property type="match status" value="1"/>
</dbReference>
<dbReference type="Pfam" id="PF06375">
    <property type="entry name" value="AP3D1"/>
    <property type="match status" value="1"/>
</dbReference>
<dbReference type="SMART" id="SM01354">
    <property type="entry name" value="BLVR"/>
    <property type="match status" value="1"/>
</dbReference>
<dbReference type="SUPFAM" id="SSF48371">
    <property type="entry name" value="ARM repeat"/>
    <property type="match status" value="1"/>
</dbReference>
<proteinExistence type="evidence at protein level"/>
<name>AP3D1_BOVIN</name>
<comment type="function">
    <text evidence="2 3">Part of the AP-3 complex, an adaptor-related complex which is not clathrin-associated. The complex is associated with the Golgi region as well as more peripheral structures. It facilitates the budding of vesicles from the Golgi membrane and may be directly involved in trafficking to lysosomes. Involved in process of CD8+ T-cell and NK cell degranulation. In concert with the BLOC-1 complex, AP-3 is required to target cargos into vesicles assembled at cell bodies for delivery into neurites and nerve terminals.</text>
</comment>
<comment type="subunit">
    <text evidence="2 6">AP-3 associates with the BLOC-1 complex (By similarity). Adaptor protein complex 3 (AP-3) is a heterotetramer composed of two large adaptins (delta-type subunit AP3D1 and beta-type subunit AP3B1 or AP3B2), a medium adaptin (mu-type subunit AP3M1 or AP3M2) and a small adaptin (sigma-type subunit APS1 or AP3S2) (PubMed:12692298). Interacts with SLC30A2 (By similarity). Interacts with CLN3 (via dileucine motif); this interaction facilitates lysosomal targeting (By similarity).</text>
</comment>
<comment type="subcellular location">
    <subcellularLocation>
        <location evidence="6">Cytoplasm</location>
    </subcellularLocation>
    <subcellularLocation>
        <location evidence="1">Golgi apparatus membrane</location>
        <topology evidence="1">Peripheral membrane protein</topology>
        <orientation evidence="1">Cytoplasmic side</orientation>
    </subcellularLocation>
</comment>
<comment type="miscellaneous">
    <text evidence="8">Was originally thought to be a bovine leukemia virus receptor.</text>
</comment>
<comment type="similarity">
    <text evidence="7">Belongs to the adaptor complexes large subunit family.</text>
</comment>
<comment type="sequence caution" evidence="7">
    <conflict type="erroneous initiation">
        <sequence resource="EMBL-CDS" id="AAA30633"/>
    </conflict>
    <text>Truncated N-terminus.</text>
</comment>
<comment type="sequence caution" evidence="7">
    <conflict type="frameshift">
        <sequence resource="EMBL-CDS" id="AAA30633"/>
    </conflict>
</comment>
<comment type="sequence caution" evidence="7">
    <conflict type="erroneous gene model prediction">
        <sequence resource="EMBL-CDS" id="AAB32770"/>
    </conflict>
</comment>
<comment type="sequence caution" evidence="7">
    <conflict type="erroneous initiation">
        <sequence resource="EMBL-CDS" id="BAA36591"/>
    </conflict>
    <text>Truncated N-terminus.</text>
</comment>
<feature type="initiator methionine" description="Removed" evidence="2">
    <location>
        <position position="1"/>
    </location>
</feature>
<feature type="chain" id="PRO_0000193765" description="AP-3 complex subunit delta-1">
    <location>
        <begin position="2"/>
        <end position="1207"/>
    </location>
</feature>
<feature type="repeat" description="HEAT 1">
    <location>
        <begin position="34"/>
        <end position="71"/>
    </location>
</feature>
<feature type="repeat" description="HEAT 2">
    <location>
        <begin position="142"/>
        <end position="179"/>
    </location>
</feature>
<feature type="repeat" description="HEAT 3">
    <location>
        <begin position="180"/>
        <end position="216"/>
    </location>
</feature>
<feature type="repeat" description="HEAT 4">
    <location>
        <begin position="218"/>
        <end position="254"/>
    </location>
</feature>
<feature type="repeat" description="HEAT 5">
    <location>
        <begin position="257"/>
        <end position="296"/>
    </location>
</feature>
<feature type="repeat" description="HEAT 6">
    <location>
        <begin position="298"/>
        <end position="336"/>
    </location>
</feature>
<feature type="repeat" description="HEAT 7">
    <location>
        <begin position="337"/>
        <end position="373"/>
    </location>
</feature>
<feature type="repeat" description="HEAT 8">
    <location>
        <begin position="375"/>
        <end position="409"/>
    </location>
</feature>
<feature type="repeat" description="HEAT 9">
    <location>
        <begin position="521"/>
        <end position="558"/>
    </location>
</feature>
<feature type="region of interest" description="Disordered" evidence="5">
    <location>
        <begin position="630"/>
        <end position="695"/>
    </location>
</feature>
<feature type="region of interest" description="Disordered" evidence="5">
    <location>
        <begin position="731"/>
        <end position="970"/>
    </location>
</feature>
<feature type="coiled-coil region" evidence="4">
    <location>
        <begin position="659"/>
        <end position="679"/>
    </location>
</feature>
<feature type="coiled-coil region" evidence="4">
    <location>
        <begin position="725"/>
        <end position="752"/>
    </location>
</feature>
<feature type="coiled-coil region" evidence="4">
    <location>
        <begin position="846"/>
        <end position="870"/>
    </location>
</feature>
<feature type="compositionally biased region" description="Basic and acidic residues" evidence="5">
    <location>
        <begin position="648"/>
        <end position="675"/>
    </location>
</feature>
<feature type="compositionally biased region" description="Basic and acidic residues" evidence="5">
    <location>
        <begin position="731"/>
        <end position="740"/>
    </location>
</feature>
<feature type="compositionally biased region" description="Basic residues" evidence="5">
    <location>
        <begin position="741"/>
        <end position="759"/>
    </location>
</feature>
<feature type="compositionally biased region" description="Acidic residues" evidence="5">
    <location>
        <begin position="777"/>
        <end position="794"/>
    </location>
</feature>
<feature type="compositionally biased region" description="Basic and acidic residues" evidence="5">
    <location>
        <begin position="795"/>
        <end position="840"/>
    </location>
</feature>
<feature type="compositionally biased region" description="Basic residues" evidence="5">
    <location>
        <begin position="841"/>
        <end position="854"/>
    </location>
</feature>
<feature type="compositionally biased region" description="Basic and acidic residues" evidence="5">
    <location>
        <begin position="855"/>
        <end position="869"/>
    </location>
</feature>
<feature type="compositionally biased region" description="Basic and acidic residues" evidence="5">
    <location>
        <begin position="899"/>
        <end position="908"/>
    </location>
</feature>
<feature type="compositionally biased region" description="Basic residues" evidence="5">
    <location>
        <begin position="923"/>
        <end position="933"/>
    </location>
</feature>
<feature type="compositionally biased region" description="Acidic residues" evidence="5">
    <location>
        <begin position="952"/>
        <end position="969"/>
    </location>
</feature>
<feature type="modified residue" description="N-acetylalanine" evidence="2">
    <location>
        <position position="2"/>
    </location>
</feature>
<feature type="modified residue" description="Phosphoserine" evidence="2">
    <location>
        <position position="632"/>
    </location>
</feature>
<feature type="modified residue" description="Phosphoserine" evidence="2">
    <location>
        <position position="634"/>
    </location>
</feature>
<feature type="modified residue" description="Phosphoserine" evidence="2">
    <location>
        <position position="636"/>
    </location>
</feature>
<feature type="modified residue" description="Phosphoserine" evidence="2">
    <location>
        <position position="688"/>
    </location>
</feature>
<feature type="modified residue" description="Phosphoserine" evidence="2">
    <location>
        <position position="758"/>
    </location>
</feature>
<feature type="modified residue" description="Phosphoserine" evidence="2">
    <location>
        <position position="759"/>
    </location>
</feature>
<feature type="modified residue" description="Phosphothreonine" evidence="2">
    <location>
        <position position="762"/>
    </location>
</feature>
<feature type="modified residue" description="Phosphoserine" evidence="2">
    <location>
        <position position="764"/>
    </location>
</feature>
<feature type="modified residue" description="Phosphoserine" evidence="2">
    <location>
        <position position="788"/>
    </location>
</feature>
<feature type="modified residue" description="Phosphoserine" evidence="2">
    <location>
        <position position="829"/>
    </location>
</feature>
<feature type="sequence conflict" description="In Ref. 2; AAB32770 and 3; AAA30633." evidence="7" ref="2 3">
    <original>S</original>
    <variation>R</variation>
    <location>
        <position position="758"/>
    </location>
</feature>
<gene>
    <name type="primary">AP3D1</name>
    <name type="synonym">BLVR</name>
</gene>
<sequence>MALKMVKGSIDRMFDKNLQDLVRGIRNHKEDEAKYISQCIDEIKQELKQDNIAVKANAVCKLTYLQMLGYDISWAAFNIIEVMSASKFTFKRIGYLAASQCFHEGTDVIMLTTNQIRKDLSSPSQYDTGVALTGLSCFVTPDLARDLANDIMTLMSHTKPYIRKKAVLIMYKVFLKYPESLRPAFPRLKEKLEDPDPGVQSAAVNVICELARRNPKNYLSLAPLFFKLMTSSTNNWVLIKIIKLFGALTPLEPRLGKKLIEPLTNLIHSTSAMSLLYECVNTVIAVLISLSSGMPNHSASIQLCVQKLRILIEDSDQNLKYLGLLAMSKILRTHPKSVQAHKDLVLQCLDDKDESIRLRALDLLYGMVSKKNLMEIVKKLMTHVDKAEGTTYRDELLTKIIDICSQSNYQHITNFEWYISILVELTRLEGTRHGHLIAAQMLDVAIRVKAIRRFAVAQMSALLDSAHLVASSPQRSGICEVLYAAAWICGEFSEHLQEPQQTLEAMLRPKVTTLPGHIQAVYVQNVVKLYAAILQQKEQAADTSAAQEVTQLLVERLPQFVQSADLEVQERASCILQLVKHVQKLQAKDVPVAEEVSALFAGELNPVAPKAQKKVPVPEGLDLDAWINEPLSDSESEDEKPKAMFQDEEQRHTKPRAPEADEQELARRREARRQEQANNPFYIKSSPSPQKRYQDAPGVEHIPVVQIDLSVPLKVPGMPLSDQYVKLEEERRHRQRLEKDKRKKKKRERERRGTRRHSSLHTESDEDIAPAQRVDIVTEEMPENALPSDEDDKDPNDPYRALDIDLDKPLADSEKLPVQKHRNAETSKSPEKEDVPLVEKKSKKPKKKEKKHKEKEREKKKKEVEKGEDLDFWLSTTPPAATPALEELEVNTTVTVLKEGQEEPRGEEQDAEEDREQDLEKKPSKHKKKKHKKDKEERPKDKRKSKKKVPPADEEAAEPVENGTLEEEPLPPMSSYILLAENSYIKMTYDVQGSLQKDSQVTVSVVLENQSDSFLKSMELNVLDSLNARLARPEGSSVHDGVPVPFQLPPGISNEAQFVFTIQSIVMAQKLKGTLSFIAKNDEGSTHEKLDFKLHFTCTSYLVTTPCYSDAFAKLLESGDLSMSSIKVDGISMSFHNLLAKICFHHRFSVVERVDSCASMYSRSIQGHHVCLLVKKGEKSVSVDGKCSDPTLLSNLLEEMKETLATC</sequence>
<reference key="1">
    <citation type="journal article" date="2003" name="J. Gen. Virol.">
        <title>Evaluation of the delta subunit of bovine adaptor protein complex 3 as a receptor for bovine leukaemia virus.</title>
        <authorList>
            <person name="Suzuki T."/>
            <person name="Matsubara Y."/>
            <person name="Kitani H."/>
            <person name="Ikeda H."/>
        </authorList>
    </citation>
    <scope>NUCLEOTIDE SEQUENCE [MRNA]</scope>
    <scope>SUBCELLULAR LOCATION</scope>
    <scope>IDENTIFICATION IN THE AP-3 COMPLEX</scope>
    <scope>LACK OF FUNCTION AS RECEPTOR FOR BOVINE LEUKEMIA VIRUS</scope>
    <source>
        <tissue>Brain</tissue>
    </source>
</reference>
<reference key="2">
    <citation type="journal article" date="1994" name="Arch. Virol.">
        <title>Isolation of the missing 5'-end of the encoding region of the bovine leukemia virus cell receptor gene.</title>
        <authorList>
            <person name="Ban J."/>
            <person name="Truong A.T."/>
            <person name="Horion B."/>
            <person name="Altaner C."/>
            <person name="Burny A."/>
            <person name="Portetelle D."/>
            <person name="Kettmann R."/>
        </authorList>
    </citation>
    <scope>NUCLEOTIDE SEQUENCE [GENOMIC DNA] OF 493-845</scope>
    <source>
        <tissue>Kidney</tissue>
    </source>
</reference>
<reference key="3">
    <citation type="journal article" date="1993" name="J. Virol.">
        <title>Isolation and characterization of a 2.3-kilobase-pair cDNA fragment encoding the binding domain of the bovine leukemia virus cell receptor.</title>
        <authorList>
            <person name="Ban J."/>
            <person name="Portetelle D."/>
            <person name="Altaner C."/>
            <person name="Horion B."/>
            <person name="Milan D."/>
            <person name="Krchnak V."/>
            <person name="Burny A."/>
            <person name="Kettmann R."/>
        </authorList>
    </citation>
    <scope>NUCLEOTIDE SEQUENCE [MRNA] OF 758-1207</scope>
    <source>
        <tissue>Kidney</tissue>
    </source>
</reference>